<gene>
    <name evidence="1" type="primary">rpsI</name>
    <name type="ordered locus">R01242</name>
    <name type="ORF">SMc01803</name>
</gene>
<organism>
    <name type="scientific">Rhizobium meliloti (strain 1021)</name>
    <name type="common">Ensifer meliloti</name>
    <name type="synonym">Sinorhizobium meliloti</name>
    <dbReference type="NCBI Taxonomy" id="266834"/>
    <lineage>
        <taxon>Bacteria</taxon>
        <taxon>Pseudomonadati</taxon>
        <taxon>Pseudomonadota</taxon>
        <taxon>Alphaproteobacteria</taxon>
        <taxon>Hyphomicrobiales</taxon>
        <taxon>Rhizobiaceae</taxon>
        <taxon>Sinorhizobium/Ensifer group</taxon>
        <taxon>Sinorhizobium</taxon>
    </lineage>
</organism>
<feature type="chain" id="PRO_0000111396" description="Small ribosomal subunit protein uS9">
    <location>
        <begin position="1"/>
        <end position="155"/>
    </location>
</feature>
<accession>Q92QR5</accession>
<dbReference type="EMBL" id="AL591688">
    <property type="protein sequence ID" value="CAC45821.1"/>
    <property type="molecule type" value="Genomic_DNA"/>
</dbReference>
<dbReference type="RefSeq" id="NP_385348.1">
    <property type="nucleotide sequence ID" value="NC_003047.1"/>
</dbReference>
<dbReference type="RefSeq" id="WP_003529231.1">
    <property type="nucleotide sequence ID" value="NC_003047.1"/>
</dbReference>
<dbReference type="SMR" id="Q92QR5"/>
<dbReference type="EnsemblBacteria" id="CAC45821">
    <property type="protein sequence ID" value="CAC45821"/>
    <property type="gene ID" value="SMc01803"/>
</dbReference>
<dbReference type="GeneID" id="89575564"/>
<dbReference type="KEGG" id="sme:SMc01803"/>
<dbReference type="PATRIC" id="fig|266834.11.peg.2654"/>
<dbReference type="eggNOG" id="COG0103">
    <property type="taxonomic scope" value="Bacteria"/>
</dbReference>
<dbReference type="HOGENOM" id="CLU_046483_2_0_5"/>
<dbReference type="OrthoDB" id="9803965at2"/>
<dbReference type="Proteomes" id="UP000001976">
    <property type="component" value="Chromosome"/>
</dbReference>
<dbReference type="GO" id="GO:0022627">
    <property type="term" value="C:cytosolic small ribosomal subunit"/>
    <property type="evidence" value="ECO:0007669"/>
    <property type="project" value="TreeGrafter"/>
</dbReference>
<dbReference type="GO" id="GO:0003723">
    <property type="term" value="F:RNA binding"/>
    <property type="evidence" value="ECO:0007669"/>
    <property type="project" value="TreeGrafter"/>
</dbReference>
<dbReference type="GO" id="GO:0003735">
    <property type="term" value="F:structural constituent of ribosome"/>
    <property type="evidence" value="ECO:0007669"/>
    <property type="project" value="InterPro"/>
</dbReference>
<dbReference type="GO" id="GO:0006412">
    <property type="term" value="P:translation"/>
    <property type="evidence" value="ECO:0007669"/>
    <property type="project" value="UniProtKB-UniRule"/>
</dbReference>
<dbReference type="FunFam" id="3.30.230.10:FF:000001">
    <property type="entry name" value="30S ribosomal protein S9"/>
    <property type="match status" value="1"/>
</dbReference>
<dbReference type="Gene3D" id="3.30.230.10">
    <property type="match status" value="1"/>
</dbReference>
<dbReference type="HAMAP" id="MF_00532_B">
    <property type="entry name" value="Ribosomal_uS9_B"/>
    <property type="match status" value="1"/>
</dbReference>
<dbReference type="InterPro" id="IPR020568">
    <property type="entry name" value="Ribosomal_Su5_D2-typ_SF"/>
</dbReference>
<dbReference type="InterPro" id="IPR000754">
    <property type="entry name" value="Ribosomal_uS9"/>
</dbReference>
<dbReference type="InterPro" id="IPR023035">
    <property type="entry name" value="Ribosomal_uS9_bac/plastid"/>
</dbReference>
<dbReference type="InterPro" id="IPR020574">
    <property type="entry name" value="Ribosomal_uS9_CS"/>
</dbReference>
<dbReference type="InterPro" id="IPR014721">
    <property type="entry name" value="Ribsml_uS5_D2-typ_fold_subgr"/>
</dbReference>
<dbReference type="NCBIfam" id="NF001099">
    <property type="entry name" value="PRK00132.1"/>
    <property type="match status" value="1"/>
</dbReference>
<dbReference type="PANTHER" id="PTHR21569">
    <property type="entry name" value="RIBOSOMAL PROTEIN S9"/>
    <property type="match status" value="1"/>
</dbReference>
<dbReference type="PANTHER" id="PTHR21569:SF1">
    <property type="entry name" value="SMALL RIBOSOMAL SUBUNIT PROTEIN US9M"/>
    <property type="match status" value="1"/>
</dbReference>
<dbReference type="Pfam" id="PF00380">
    <property type="entry name" value="Ribosomal_S9"/>
    <property type="match status" value="1"/>
</dbReference>
<dbReference type="SUPFAM" id="SSF54211">
    <property type="entry name" value="Ribosomal protein S5 domain 2-like"/>
    <property type="match status" value="1"/>
</dbReference>
<dbReference type="PROSITE" id="PS00360">
    <property type="entry name" value="RIBOSOMAL_S9"/>
    <property type="match status" value="1"/>
</dbReference>
<proteinExistence type="inferred from homology"/>
<name>RS9_RHIME</name>
<comment type="similarity">
    <text evidence="1">Belongs to the universal ribosomal protein uS9 family.</text>
</comment>
<sequence>MADLSALKEIATTAEPAAPVHVKKVDAQGRSYATGKRKDAVARVWIKAGSGKITINGKPFSDYFARPVLQMILQQPVVAAARDGQFDIDATVAGGGLSGQAGAVRHGISKALTYFEPGLRPVLKRGGFLTRDSRVVERKKYGRAKARRSFQFSKR</sequence>
<evidence type="ECO:0000255" key="1">
    <source>
        <dbReference type="HAMAP-Rule" id="MF_00532"/>
    </source>
</evidence>
<evidence type="ECO:0000305" key="2"/>
<reference key="1">
    <citation type="journal article" date="2001" name="Proc. Natl. Acad. Sci. U.S.A.">
        <title>Analysis of the chromosome sequence of the legume symbiont Sinorhizobium meliloti strain 1021.</title>
        <authorList>
            <person name="Capela D."/>
            <person name="Barloy-Hubler F."/>
            <person name="Gouzy J."/>
            <person name="Bothe G."/>
            <person name="Ampe F."/>
            <person name="Batut J."/>
            <person name="Boistard P."/>
            <person name="Becker A."/>
            <person name="Boutry M."/>
            <person name="Cadieu E."/>
            <person name="Dreano S."/>
            <person name="Gloux S."/>
            <person name="Godrie T."/>
            <person name="Goffeau A."/>
            <person name="Kahn D."/>
            <person name="Kiss E."/>
            <person name="Lelaure V."/>
            <person name="Masuy D."/>
            <person name="Pohl T."/>
            <person name="Portetelle D."/>
            <person name="Puehler A."/>
            <person name="Purnelle B."/>
            <person name="Ramsperger U."/>
            <person name="Renard C."/>
            <person name="Thebault P."/>
            <person name="Vandenbol M."/>
            <person name="Weidner S."/>
            <person name="Galibert F."/>
        </authorList>
    </citation>
    <scope>NUCLEOTIDE SEQUENCE [LARGE SCALE GENOMIC DNA]</scope>
    <source>
        <strain>1021</strain>
    </source>
</reference>
<reference key="2">
    <citation type="journal article" date="2001" name="Science">
        <title>The composite genome of the legume symbiont Sinorhizobium meliloti.</title>
        <authorList>
            <person name="Galibert F."/>
            <person name="Finan T.M."/>
            <person name="Long S.R."/>
            <person name="Puehler A."/>
            <person name="Abola P."/>
            <person name="Ampe F."/>
            <person name="Barloy-Hubler F."/>
            <person name="Barnett M.J."/>
            <person name="Becker A."/>
            <person name="Boistard P."/>
            <person name="Bothe G."/>
            <person name="Boutry M."/>
            <person name="Bowser L."/>
            <person name="Buhrmester J."/>
            <person name="Cadieu E."/>
            <person name="Capela D."/>
            <person name="Chain P."/>
            <person name="Cowie A."/>
            <person name="Davis R.W."/>
            <person name="Dreano S."/>
            <person name="Federspiel N.A."/>
            <person name="Fisher R.F."/>
            <person name="Gloux S."/>
            <person name="Godrie T."/>
            <person name="Goffeau A."/>
            <person name="Golding B."/>
            <person name="Gouzy J."/>
            <person name="Gurjal M."/>
            <person name="Hernandez-Lucas I."/>
            <person name="Hong A."/>
            <person name="Huizar L."/>
            <person name="Hyman R.W."/>
            <person name="Jones T."/>
            <person name="Kahn D."/>
            <person name="Kahn M.L."/>
            <person name="Kalman S."/>
            <person name="Keating D.H."/>
            <person name="Kiss E."/>
            <person name="Komp C."/>
            <person name="Lelaure V."/>
            <person name="Masuy D."/>
            <person name="Palm C."/>
            <person name="Peck M.C."/>
            <person name="Pohl T.M."/>
            <person name="Portetelle D."/>
            <person name="Purnelle B."/>
            <person name="Ramsperger U."/>
            <person name="Surzycki R."/>
            <person name="Thebault P."/>
            <person name="Vandenbol M."/>
            <person name="Vorhoelter F.J."/>
            <person name="Weidner S."/>
            <person name="Wells D.H."/>
            <person name="Wong K."/>
            <person name="Yeh K.-C."/>
            <person name="Batut J."/>
        </authorList>
    </citation>
    <scope>NUCLEOTIDE SEQUENCE [LARGE SCALE GENOMIC DNA]</scope>
    <source>
        <strain>1021</strain>
    </source>
</reference>
<protein>
    <recommendedName>
        <fullName evidence="1">Small ribosomal subunit protein uS9</fullName>
    </recommendedName>
    <alternativeName>
        <fullName evidence="2">30S ribosomal protein S9</fullName>
    </alternativeName>
</protein>
<keyword id="KW-1185">Reference proteome</keyword>
<keyword id="KW-0687">Ribonucleoprotein</keyword>
<keyword id="KW-0689">Ribosomal protein</keyword>